<organism>
    <name type="scientific">Methylobacterium sp. (strain 4-46)</name>
    <dbReference type="NCBI Taxonomy" id="426117"/>
    <lineage>
        <taxon>Bacteria</taxon>
        <taxon>Pseudomonadati</taxon>
        <taxon>Pseudomonadota</taxon>
        <taxon>Alphaproteobacteria</taxon>
        <taxon>Hyphomicrobiales</taxon>
        <taxon>Methylobacteriaceae</taxon>
        <taxon>Methylobacterium</taxon>
    </lineage>
</organism>
<proteinExistence type="inferred from homology"/>
<keyword id="KW-0687">Ribonucleoprotein</keyword>
<keyword id="KW-0689">Ribosomal protein</keyword>
<keyword id="KW-0694">RNA-binding</keyword>
<keyword id="KW-0699">rRNA-binding</keyword>
<name>RS5_METS4</name>
<feature type="chain" id="PRO_1000140870" description="Small ribosomal subunit protein uS5">
    <location>
        <begin position="1"/>
        <end position="192"/>
    </location>
</feature>
<feature type="domain" description="S5 DRBM" evidence="1">
    <location>
        <begin position="20"/>
        <end position="83"/>
    </location>
</feature>
<feature type="region of interest" description="Disordered" evidence="2">
    <location>
        <begin position="165"/>
        <end position="192"/>
    </location>
</feature>
<comment type="function">
    <text evidence="1">With S4 and S12 plays an important role in translational accuracy.</text>
</comment>
<comment type="function">
    <text evidence="1">Located at the back of the 30S subunit body where it stabilizes the conformation of the head with respect to the body.</text>
</comment>
<comment type="subunit">
    <text evidence="1">Part of the 30S ribosomal subunit. Contacts proteins S4 and S8.</text>
</comment>
<comment type="domain">
    <text>The N-terminal domain interacts with the head of the 30S subunit; the C-terminal domain interacts with the body and contacts protein S4. The interaction surface between S4 and S5 is involved in control of translational fidelity.</text>
</comment>
<comment type="similarity">
    <text evidence="1">Belongs to the universal ribosomal protein uS5 family.</text>
</comment>
<gene>
    <name evidence="1" type="primary">rpsE</name>
    <name type="ordered locus">M446_0336</name>
</gene>
<protein>
    <recommendedName>
        <fullName evidence="1">Small ribosomal subunit protein uS5</fullName>
    </recommendedName>
    <alternativeName>
        <fullName evidence="3">30S ribosomal protein S5</fullName>
    </alternativeName>
</protein>
<dbReference type="EMBL" id="CP000943">
    <property type="protein sequence ID" value="ACA14907.1"/>
    <property type="molecule type" value="Genomic_DNA"/>
</dbReference>
<dbReference type="RefSeq" id="WP_012330325.1">
    <property type="nucleotide sequence ID" value="NC_010511.1"/>
</dbReference>
<dbReference type="SMR" id="B0UHV2"/>
<dbReference type="STRING" id="426117.M446_0336"/>
<dbReference type="KEGG" id="met:M446_0336"/>
<dbReference type="eggNOG" id="COG0098">
    <property type="taxonomic scope" value="Bacteria"/>
</dbReference>
<dbReference type="HOGENOM" id="CLU_065898_2_2_5"/>
<dbReference type="GO" id="GO:0015935">
    <property type="term" value="C:small ribosomal subunit"/>
    <property type="evidence" value="ECO:0007669"/>
    <property type="project" value="InterPro"/>
</dbReference>
<dbReference type="GO" id="GO:0019843">
    <property type="term" value="F:rRNA binding"/>
    <property type="evidence" value="ECO:0007669"/>
    <property type="project" value="UniProtKB-UniRule"/>
</dbReference>
<dbReference type="GO" id="GO:0003735">
    <property type="term" value="F:structural constituent of ribosome"/>
    <property type="evidence" value="ECO:0007669"/>
    <property type="project" value="InterPro"/>
</dbReference>
<dbReference type="GO" id="GO:0006412">
    <property type="term" value="P:translation"/>
    <property type="evidence" value="ECO:0007669"/>
    <property type="project" value="UniProtKB-UniRule"/>
</dbReference>
<dbReference type="FunFam" id="3.30.160.20:FF:000001">
    <property type="entry name" value="30S ribosomal protein S5"/>
    <property type="match status" value="1"/>
</dbReference>
<dbReference type="FunFam" id="3.30.230.10:FF:000002">
    <property type="entry name" value="30S ribosomal protein S5"/>
    <property type="match status" value="1"/>
</dbReference>
<dbReference type="Gene3D" id="3.30.160.20">
    <property type="match status" value="1"/>
</dbReference>
<dbReference type="Gene3D" id="3.30.230.10">
    <property type="match status" value="1"/>
</dbReference>
<dbReference type="HAMAP" id="MF_01307_B">
    <property type="entry name" value="Ribosomal_uS5_B"/>
    <property type="match status" value="1"/>
</dbReference>
<dbReference type="InterPro" id="IPR020568">
    <property type="entry name" value="Ribosomal_Su5_D2-typ_SF"/>
</dbReference>
<dbReference type="InterPro" id="IPR000851">
    <property type="entry name" value="Ribosomal_uS5"/>
</dbReference>
<dbReference type="InterPro" id="IPR005712">
    <property type="entry name" value="Ribosomal_uS5_bac-type"/>
</dbReference>
<dbReference type="InterPro" id="IPR005324">
    <property type="entry name" value="Ribosomal_uS5_C"/>
</dbReference>
<dbReference type="InterPro" id="IPR013810">
    <property type="entry name" value="Ribosomal_uS5_N"/>
</dbReference>
<dbReference type="InterPro" id="IPR018192">
    <property type="entry name" value="Ribosomal_uS5_N_CS"/>
</dbReference>
<dbReference type="InterPro" id="IPR014721">
    <property type="entry name" value="Ribsml_uS5_D2-typ_fold_subgr"/>
</dbReference>
<dbReference type="NCBIfam" id="TIGR01021">
    <property type="entry name" value="rpsE_bact"/>
    <property type="match status" value="1"/>
</dbReference>
<dbReference type="PANTHER" id="PTHR48277">
    <property type="entry name" value="MITOCHONDRIAL RIBOSOMAL PROTEIN S5"/>
    <property type="match status" value="1"/>
</dbReference>
<dbReference type="PANTHER" id="PTHR48277:SF1">
    <property type="entry name" value="MITOCHONDRIAL RIBOSOMAL PROTEIN S5"/>
    <property type="match status" value="1"/>
</dbReference>
<dbReference type="Pfam" id="PF00333">
    <property type="entry name" value="Ribosomal_S5"/>
    <property type="match status" value="1"/>
</dbReference>
<dbReference type="Pfam" id="PF03719">
    <property type="entry name" value="Ribosomal_S5_C"/>
    <property type="match status" value="1"/>
</dbReference>
<dbReference type="SUPFAM" id="SSF54768">
    <property type="entry name" value="dsRNA-binding domain-like"/>
    <property type="match status" value="1"/>
</dbReference>
<dbReference type="SUPFAM" id="SSF54211">
    <property type="entry name" value="Ribosomal protein S5 domain 2-like"/>
    <property type="match status" value="1"/>
</dbReference>
<dbReference type="PROSITE" id="PS00585">
    <property type="entry name" value="RIBOSOMAL_S5"/>
    <property type="match status" value="1"/>
</dbReference>
<dbReference type="PROSITE" id="PS50881">
    <property type="entry name" value="S5_DSRBD"/>
    <property type="match status" value="1"/>
</dbReference>
<sequence>MAREREGRRRDEREERDTEFVDRLVHINRVAKVVKGGRRFGFAALVVVGDQKGRVGFGHGKAREVPEAIRKATEAAKRGLIRVALREGRTLHHDVAGRHGSGKVILRAAPQGTGIIAGGPMRAVFESVGMQDVVAKSLGSSNPYNLIRATFDALKREDSPRAVAARRGLKVSALQARRRDAEPGSADSADAA</sequence>
<evidence type="ECO:0000255" key="1">
    <source>
        <dbReference type="HAMAP-Rule" id="MF_01307"/>
    </source>
</evidence>
<evidence type="ECO:0000256" key="2">
    <source>
        <dbReference type="SAM" id="MobiDB-lite"/>
    </source>
</evidence>
<evidence type="ECO:0000305" key="3"/>
<accession>B0UHV2</accession>
<reference key="1">
    <citation type="submission" date="2008-02" db="EMBL/GenBank/DDBJ databases">
        <title>Complete sequence of chromosome of Methylobacterium sp. 4-46.</title>
        <authorList>
            <consortium name="US DOE Joint Genome Institute"/>
            <person name="Copeland A."/>
            <person name="Lucas S."/>
            <person name="Lapidus A."/>
            <person name="Glavina del Rio T."/>
            <person name="Dalin E."/>
            <person name="Tice H."/>
            <person name="Bruce D."/>
            <person name="Goodwin L."/>
            <person name="Pitluck S."/>
            <person name="Chertkov O."/>
            <person name="Brettin T."/>
            <person name="Detter J.C."/>
            <person name="Han C."/>
            <person name="Kuske C.R."/>
            <person name="Schmutz J."/>
            <person name="Larimer F."/>
            <person name="Land M."/>
            <person name="Hauser L."/>
            <person name="Kyrpides N."/>
            <person name="Ivanova N."/>
            <person name="Marx C.J."/>
            <person name="Richardson P."/>
        </authorList>
    </citation>
    <scope>NUCLEOTIDE SEQUENCE [LARGE SCALE GENOMIC DNA]</scope>
    <source>
        <strain>4-46</strain>
    </source>
</reference>